<evidence type="ECO:0000255" key="1"/>
<evidence type="ECO:0000305" key="2"/>
<proteinExistence type="inferred from homology"/>
<comment type="subcellular location">
    <subcellularLocation>
        <location evidence="2">Membrane</location>
        <topology evidence="2">Multi-pass membrane protein</topology>
    </subcellularLocation>
</comment>
<comment type="similarity">
    <text evidence="2">Belongs to the nematode receptor-like protein sra family.</text>
</comment>
<sequence>MAMYTNQTAEELETWRCTSDGIFKSQNSIWMKINFVFVFILIFLTFYLSFKAARVLKNHNVYSKGSQILLMITLLNANLNQLIFLEIRIRHLVHIFINSEDPCKIEFHSPECTYDQTIYAFTSVMSTGLLSALTFDRFFALYASTVYVRNSKDSAYMLITVSIIVTVIVHIRTYGGVSRAGYVPSCTYPPQLSLNTYQVVNNAIFWIIMANCVLTIAVLLLNIYKDKRIKKSVFDTKTRYNSFENVLTTKAICSVTSTQFVFLSFSTAALAIIRTLEAGMSEEVFHINIQYINGGVYGNLSIPVLIYLKTNQCILQRRKSIDKMTNHTGTVDSHISSLKTAWET</sequence>
<name>SRA27_CAEEL</name>
<keyword id="KW-0472">Membrane</keyword>
<keyword id="KW-1185">Reference proteome</keyword>
<keyword id="KW-0812">Transmembrane</keyword>
<keyword id="KW-1133">Transmembrane helix</keyword>
<dbReference type="EMBL" id="FO080970">
    <property type="protein sequence ID" value="CCD68192.1"/>
    <property type="molecule type" value="Genomic_DNA"/>
</dbReference>
<dbReference type="PIR" id="T16090">
    <property type="entry name" value="T16090"/>
</dbReference>
<dbReference type="RefSeq" id="NP_495328.2">
    <property type="nucleotide sequence ID" value="NM_062927.2"/>
</dbReference>
<dbReference type="FunCoup" id="Q19549">
    <property type="interactions" value="3"/>
</dbReference>
<dbReference type="PaxDb" id="6239-F18C5.1"/>
<dbReference type="EnsemblMetazoa" id="F18C5.1.1">
    <property type="protein sequence ID" value="F18C5.1.1"/>
    <property type="gene ID" value="WBGene00005053"/>
</dbReference>
<dbReference type="GeneID" id="184633"/>
<dbReference type="KEGG" id="cel:CELE_F18C5.1"/>
<dbReference type="UCSC" id="F18C5.1">
    <property type="organism name" value="c. elegans"/>
</dbReference>
<dbReference type="AGR" id="WB:WBGene00005053"/>
<dbReference type="CTD" id="184633"/>
<dbReference type="WormBase" id="F18C5.1">
    <property type="protein sequence ID" value="CE33523"/>
    <property type="gene ID" value="WBGene00005053"/>
    <property type="gene designation" value="sra-27"/>
</dbReference>
<dbReference type="eggNOG" id="ENOG502TGN7">
    <property type="taxonomic scope" value="Eukaryota"/>
</dbReference>
<dbReference type="GeneTree" id="ENSGT00970000195862"/>
<dbReference type="HOGENOM" id="CLU_070413_0_0_1"/>
<dbReference type="InParanoid" id="Q19549"/>
<dbReference type="OMA" id="MRCTSEG"/>
<dbReference type="OrthoDB" id="5849943at2759"/>
<dbReference type="PhylomeDB" id="Q19549"/>
<dbReference type="PRO" id="PR:Q19549"/>
<dbReference type="Proteomes" id="UP000001940">
    <property type="component" value="Chromosome II"/>
</dbReference>
<dbReference type="GO" id="GO:0016020">
    <property type="term" value="C:membrane"/>
    <property type="evidence" value="ECO:0007669"/>
    <property type="project" value="UniProtKB-SubCell"/>
</dbReference>
<dbReference type="GO" id="GO:0004930">
    <property type="term" value="F:G protein-coupled receptor activity"/>
    <property type="evidence" value="ECO:0007669"/>
    <property type="project" value="InterPro"/>
</dbReference>
<dbReference type="GO" id="GO:0007606">
    <property type="term" value="P:sensory perception of chemical stimulus"/>
    <property type="evidence" value="ECO:0007669"/>
    <property type="project" value="InterPro"/>
</dbReference>
<dbReference type="Gene3D" id="1.20.1070.10">
    <property type="entry name" value="Rhodopsin 7-helix transmembrane proteins"/>
    <property type="match status" value="1"/>
</dbReference>
<dbReference type="InterPro" id="IPR000344">
    <property type="entry name" value="7TM_GPCR_serpentine_rcpt_Sra"/>
</dbReference>
<dbReference type="InterPro" id="IPR000276">
    <property type="entry name" value="GPCR_Rhodpsn"/>
</dbReference>
<dbReference type="PANTHER" id="PTHR31582:SF2">
    <property type="entry name" value="G-PROTEIN COUPLED RECEPTORS FAMILY 1 PROFILE DOMAIN-CONTAINING PROTEIN-RELATED"/>
    <property type="match status" value="1"/>
</dbReference>
<dbReference type="PANTHER" id="PTHR31582">
    <property type="entry name" value="SERPENTINE RECEPTOR, CLASS A (ALPHA)-RELATED-RELATED"/>
    <property type="match status" value="1"/>
</dbReference>
<dbReference type="Pfam" id="PF02117">
    <property type="entry name" value="7TM_GPCR_Sra"/>
    <property type="match status" value="1"/>
</dbReference>
<dbReference type="PRINTS" id="PR00697">
    <property type="entry name" value="TMPROTEINSRA"/>
</dbReference>
<dbReference type="SUPFAM" id="SSF81321">
    <property type="entry name" value="Family A G protein-coupled receptor-like"/>
    <property type="match status" value="1"/>
</dbReference>
<gene>
    <name type="primary">sra-27</name>
    <name type="ORF">F18C5.1</name>
</gene>
<reference key="1">
    <citation type="journal article" date="1998" name="Science">
        <title>Genome sequence of the nematode C. elegans: a platform for investigating biology.</title>
        <authorList>
            <consortium name="The C. elegans sequencing consortium"/>
        </authorList>
    </citation>
    <scope>NUCLEOTIDE SEQUENCE [LARGE SCALE GENOMIC DNA]</scope>
    <source>
        <strain>Bristol N2</strain>
    </source>
</reference>
<accession>Q19549</accession>
<feature type="chain" id="PRO_0000104488" description="Serpentine receptor class alpha-27">
    <location>
        <begin position="1"/>
        <end position="344"/>
    </location>
</feature>
<feature type="transmembrane region" description="Helical" evidence="1">
    <location>
        <begin position="28"/>
        <end position="48"/>
    </location>
</feature>
<feature type="transmembrane region" description="Helical" evidence="1">
    <location>
        <begin position="67"/>
        <end position="87"/>
    </location>
</feature>
<feature type="transmembrane region" description="Helical" evidence="1">
    <location>
        <begin position="128"/>
        <end position="148"/>
    </location>
</feature>
<feature type="transmembrane region" description="Helical" evidence="1">
    <location>
        <begin position="157"/>
        <end position="177"/>
    </location>
</feature>
<feature type="transmembrane region" description="Helical" evidence="1">
    <location>
        <begin position="203"/>
        <end position="223"/>
    </location>
</feature>
<feature type="transmembrane region" description="Helical" evidence="1">
    <location>
        <begin position="252"/>
        <end position="272"/>
    </location>
</feature>
<feature type="transmembrane region" description="Helical" evidence="1">
    <location>
        <begin position="287"/>
        <end position="307"/>
    </location>
</feature>
<organism>
    <name type="scientific">Caenorhabditis elegans</name>
    <dbReference type="NCBI Taxonomy" id="6239"/>
    <lineage>
        <taxon>Eukaryota</taxon>
        <taxon>Metazoa</taxon>
        <taxon>Ecdysozoa</taxon>
        <taxon>Nematoda</taxon>
        <taxon>Chromadorea</taxon>
        <taxon>Rhabditida</taxon>
        <taxon>Rhabditina</taxon>
        <taxon>Rhabditomorpha</taxon>
        <taxon>Rhabditoidea</taxon>
        <taxon>Rhabditidae</taxon>
        <taxon>Peloderinae</taxon>
        <taxon>Caenorhabditis</taxon>
    </lineage>
</organism>
<protein>
    <recommendedName>
        <fullName>Serpentine receptor class alpha-27</fullName>
        <shortName>Protein sra-27</shortName>
    </recommendedName>
</protein>